<protein>
    <recommendedName>
        <fullName evidence="1">Envelope glycoprotein M</fullName>
        <shortName evidence="1">gM</shortName>
    </recommendedName>
</protein>
<organism>
    <name type="scientific">Bovine herpesvirus 1.1 (strain Cooper)</name>
    <name type="common">BoHV-1</name>
    <name type="synonym">Infectious bovine rhinotracheitis virus</name>
    <dbReference type="NCBI Taxonomy" id="10323"/>
    <lineage>
        <taxon>Viruses</taxon>
        <taxon>Duplodnaviria</taxon>
        <taxon>Heunggongvirae</taxon>
        <taxon>Peploviricota</taxon>
        <taxon>Herviviricetes</taxon>
        <taxon>Herpesvirales</taxon>
        <taxon>Orthoherpesviridae</taxon>
        <taxon>Alphaherpesvirinae</taxon>
        <taxon>Varicellovirus</taxon>
        <taxon>Varicellovirus bovinealpha1</taxon>
    </lineage>
</organism>
<proteinExistence type="evidence at protein level"/>
<organismHost>
    <name type="scientific">Bos taurus</name>
    <name type="common">Bovine</name>
    <dbReference type="NCBI Taxonomy" id="9913"/>
</organismHost>
<name>GM_BHV1C</name>
<gene>
    <name evidence="1" type="primary">gM</name>
    <name type="ORF">UL10</name>
</gene>
<reference key="1">
    <citation type="journal article" date="1995" name="Virology">
        <title>Nucleotide sequence analysis of a 30-kb region of the bovine herpesvirus 1 genome which exhibits a colinear gene arrangement with the UL21 to UL4 genes of herpes simplex virus.</title>
        <authorList>
            <person name="Vlcek C."/>
            <person name="Benes V."/>
            <person name="Lu Z."/>
            <person name="Kutish G.F."/>
            <person name="Paces V."/>
            <person name="Rock D."/>
            <person name="Letchworth G.J."/>
            <person name="Schwyzer M."/>
        </authorList>
    </citation>
    <scope>NUCLEOTIDE SEQUENCE [GENOMIC DNA]</scope>
</reference>
<reference key="2">
    <citation type="submission" date="1997-09" db="EMBL/GenBank/DDBJ databases">
        <title>Complete DNA sequence of bovine herpesvirus 1.</title>
        <authorList>
            <person name="Schwyzer M."/>
            <person name="Paces V."/>
            <person name="Letchworth G.J."/>
            <person name="Misra V."/>
            <person name="Buhk H.J."/>
            <person name="Lowery D.E."/>
            <person name="Simard C."/>
            <person name="Bello L.J."/>
            <person name="Thiry E."/>
            <person name="Vlcek C."/>
        </authorList>
    </citation>
    <scope>NUCLEOTIDE SEQUENCE [LARGE SCALE GENOMIC DNA]</scope>
</reference>
<reference key="3">
    <citation type="journal article" date="1998" name="J. Virol.">
        <title>Bovine herpesvirus 1 glycoprotein M forms a disulfide-linked heterodimer with the U(L)49.5 protein.</title>
        <authorList>
            <person name="Wu S.X."/>
            <person name="Zhu X.P."/>
            <person name="Letchworth G.J."/>
        </authorList>
    </citation>
    <scope>IDENTIFICATION OF PROBABLE FRAMESHIFT</scope>
    <scope>GLYCOSYLATION</scope>
    <scope>SUBUNIT</scope>
    <scope>DISULFIDE BOND</scope>
</reference>
<dbReference type="EMBL" id="Z48053">
    <property type="protein sequence ID" value="CAA88123.1"/>
    <property type="status" value="ALT_FRAME"/>
    <property type="molecule type" value="Genomic_DNA"/>
</dbReference>
<dbReference type="EMBL" id="AJ004801">
    <property type="protein sequence ID" value="CAA06124.1"/>
    <property type="molecule type" value="Genomic_DNA"/>
</dbReference>
<dbReference type="PIR" id="S61245">
    <property type="entry name" value="S61245"/>
</dbReference>
<dbReference type="RefSeq" id="NP_045349.1">
    <property type="nucleotide sequence ID" value="NC_001847.1"/>
</dbReference>
<dbReference type="Proteomes" id="UP000202075">
    <property type="component" value="Segment"/>
</dbReference>
<dbReference type="GO" id="GO:0044175">
    <property type="term" value="C:host cell endosome membrane"/>
    <property type="evidence" value="ECO:0007669"/>
    <property type="project" value="UniProtKB-SubCell"/>
</dbReference>
<dbReference type="GO" id="GO:0044177">
    <property type="term" value="C:host cell Golgi apparatus"/>
    <property type="evidence" value="ECO:0000315"/>
    <property type="project" value="AgBase"/>
</dbReference>
<dbReference type="GO" id="GO:0033644">
    <property type="term" value="C:host cell membrane"/>
    <property type="evidence" value="ECO:0000314"/>
    <property type="project" value="AgBase"/>
</dbReference>
<dbReference type="GO" id="GO:0044201">
    <property type="term" value="C:host cell nuclear inner membrane"/>
    <property type="evidence" value="ECO:0007669"/>
    <property type="project" value="UniProtKB-SubCell"/>
</dbReference>
<dbReference type="GO" id="GO:0016020">
    <property type="term" value="C:membrane"/>
    <property type="evidence" value="ECO:0007669"/>
    <property type="project" value="UniProtKB-KW"/>
</dbReference>
<dbReference type="GO" id="GO:0019031">
    <property type="term" value="C:viral envelope"/>
    <property type="evidence" value="ECO:0007669"/>
    <property type="project" value="UniProtKB-KW"/>
</dbReference>
<dbReference type="GO" id="GO:0044423">
    <property type="term" value="C:virion component"/>
    <property type="evidence" value="ECO:0000314"/>
    <property type="project" value="AgBase"/>
</dbReference>
<dbReference type="GO" id="GO:0055036">
    <property type="term" value="C:virion membrane"/>
    <property type="evidence" value="ECO:0007669"/>
    <property type="project" value="UniProtKB-SubCell"/>
</dbReference>
<dbReference type="HAMAP" id="MF_04035">
    <property type="entry name" value="HSV_GM"/>
    <property type="match status" value="1"/>
</dbReference>
<dbReference type="InterPro" id="IPR000785">
    <property type="entry name" value="Herpes_glycop_M"/>
</dbReference>
<dbReference type="Pfam" id="PF01528">
    <property type="entry name" value="Herpes_glycop"/>
    <property type="match status" value="1"/>
</dbReference>
<dbReference type="PRINTS" id="PR00333">
    <property type="entry name" value="HSVINTEGRLMP"/>
</dbReference>
<feature type="chain" id="PRO_0000115776" description="Envelope glycoprotein M">
    <location>
        <begin position="1"/>
        <end position="438"/>
    </location>
</feature>
<feature type="topological domain" description="Intravirion" evidence="1">
    <location>
        <begin position="1"/>
        <end position="13"/>
    </location>
</feature>
<feature type="transmembrane region" description="Helical" evidence="1">
    <location>
        <begin position="14"/>
        <end position="34"/>
    </location>
</feature>
<feature type="topological domain" description="Virion surface" evidence="1">
    <location>
        <begin position="35"/>
        <end position="88"/>
    </location>
</feature>
<feature type="transmembrane region" description="Helical" evidence="1">
    <location>
        <begin position="89"/>
        <end position="109"/>
    </location>
</feature>
<feature type="topological domain" description="Intravirion" evidence="1">
    <location>
        <begin position="110"/>
        <end position="132"/>
    </location>
</feature>
<feature type="transmembrane region" description="Helical" evidence="1">
    <location>
        <begin position="133"/>
        <end position="153"/>
    </location>
</feature>
<feature type="topological domain" description="Virion surface" evidence="1">
    <location>
        <begin position="154"/>
        <end position="158"/>
    </location>
</feature>
<feature type="transmembrane region" description="Helical" evidence="1">
    <location>
        <begin position="159"/>
        <end position="179"/>
    </location>
</feature>
<feature type="topological domain" description="Intravirion" evidence="1">
    <location>
        <begin position="180"/>
        <end position="212"/>
    </location>
</feature>
<feature type="transmembrane region" description="Helical" evidence="1">
    <location>
        <begin position="213"/>
        <end position="233"/>
    </location>
</feature>
<feature type="topological domain" description="Virion surface" evidence="1">
    <location>
        <begin position="234"/>
        <end position="248"/>
    </location>
</feature>
<feature type="transmembrane region" description="Helical" evidence="1">
    <location>
        <begin position="249"/>
        <end position="269"/>
    </location>
</feature>
<feature type="topological domain" description="Intravirion" evidence="1">
    <location>
        <begin position="270"/>
        <end position="276"/>
    </location>
</feature>
<feature type="transmembrane region" description="Helical" evidence="1">
    <location>
        <begin position="277"/>
        <end position="297"/>
    </location>
</feature>
<feature type="topological domain" description="Virion surface" evidence="1">
    <location>
        <begin position="298"/>
        <end position="317"/>
    </location>
</feature>
<feature type="transmembrane region" description="Helical" evidence="1">
    <location>
        <begin position="318"/>
        <end position="338"/>
    </location>
</feature>
<feature type="topological domain" description="Intravirion" evidence="1">
    <location>
        <begin position="339"/>
        <end position="438"/>
    </location>
</feature>
<feature type="region of interest" description="Disordered" evidence="2">
    <location>
        <begin position="395"/>
        <end position="438"/>
    </location>
</feature>
<feature type="compositionally biased region" description="Pro residues" evidence="2">
    <location>
        <begin position="425"/>
        <end position="438"/>
    </location>
</feature>
<feature type="disulfide bond" description="Interchain (with gN)" evidence="1">
    <location>
        <position position="45"/>
    </location>
</feature>
<comment type="function">
    <text evidence="1">Envelope glycoprotein important for virion assembly and egress. Plays a role in the correct incorporation of gH-gL into virion membrane. Directs the glycoprotein N (gN) to the host trans-Golgi network.</text>
</comment>
<comment type="subunit">
    <text evidence="1">Interacts (via N-terminus) with gN (via N-terminus). The gM-gN heterodimer forms the gCII complex.</text>
</comment>
<comment type="subcellular location">
    <subcellularLocation>
        <location evidence="1">Virion membrane</location>
        <topology evidence="1">Multi-pass membrane protein</topology>
    </subcellularLocation>
    <subcellularLocation>
        <location evidence="1">Host Golgi apparatus</location>
        <location evidence="1">Host trans-Golgi network</location>
    </subcellularLocation>
    <subcellularLocation>
        <location evidence="1">Host endosome membrane</location>
        <topology evidence="1">Multi-pass membrane protein</topology>
    </subcellularLocation>
    <subcellularLocation>
        <location evidence="1">Host nucleus inner membrane</location>
        <topology evidence="1">Multi-pass membrane protein</topology>
    </subcellularLocation>
    <text evidence="1">During virion morphogenesis, this protein accumulates in the trans-Golgi network where secondary envelopment occurs.</text>
</comment>
<comment type="PTM">
    <text evidence="3">N-glycosylated. It is not O-glycosylated.</text>
</comment>
<comment type="similarity">
    <text evidence="1">Belongs to the herpesviridae glycoprotein M family.</text>
</comment>
<comment type="sequence caution" evidence="4">
    <conflict type="frameshift">
        <sequence resource="EMBL-CDS" id="CAA88123"/>
    </conflict>
</comment>
<evidence type="ECO:0000255" key="1">
    <source>
        <dbReference type="HAMAP-Rule" id="MF_04035"/>
    </source>
</evidence>
<evidence type="ECO:0000256" key="2">
    <source>
        <dbReference type="SAM" id="MobiDB-lite"/>
    </source>
</evidence>
<evidence type="ECO:0000269" key="3">
    <source>
    </source>
</evidence>
<evidence type="ECO:0000305" key="4"/>
<accession>P52370</accession>
<accession>O39493</accession>
<sequence>MAGSAQPAAVHWRLWLAQVGVFAGLALLLLITLIGAASPGAGLPCFYAAIVNYNARNLSADGGAWAQRELGARHPALFLETPTTAAFSAYTAVVLLAVAAFDVAAAIIIRRENSGGFAAAYHMNALATLATPPGALLLGALAAWTLQAAVLLLSHKIMVLAAATYLAHLAPPAAFVGLFCTAGLPGAEYAQAVHALRERSPRAHRLLGPGRAVMINLAGGLLALIIGTAPLMLGQLLGAGLGLSLAQTVVAGVTVFCLAAVLFLVLTELVLSRYTQVLPGPAFGTLVAASCIAVASHDYFHQLRGVVRTQAPRAAARVKLALAGVALLAVAMLVLRLVRACLHHRRKGSAFYGHVSAARQQAARYIARARSSRGMAPLEGDAAALLDRGVASDDEEAVYEAHAPPRPPTIPLRRPEVPHSRASHPRPPPRSPPPAHVK</sequence>
<keyword id="KW-1015">Disulfide bond</keyword>
<keyword id="KW-0325">Glycoprotein</keyword>
<keyword id="KW-1039">Host endosome</keyword>
<keyword id="KW-1040">Host Golgi apparatus</keyword>
<keyword id="KW-1043">Host membrane</keyword>
<keyword id="KW-1048">Host nucleus</keyword>
<keyword id="KW-0472">Membrane</keyword>
<keyword id="KW-0812">Transmembrane</keyword>
<keyword id="KW-1133">Transmembrane helix</keyword>
<keyword id="KW-0261">Viral envelope protein</keyword>
<keyword id="KW-0946">Virion</keyword>